<evidence type="ECO:0000255" key="1">
    <source>
        <dbReference type="HAMAP-Rule" id="MF_01855"/>
    </source>
</evidence>
<proteinExistence type="inferred from homology"/>
<gene>
    <name evidence="1" type="primary">fbp</name>
    <name type="ordered locus">VCM66_2465</name>
</gene>
<sequence>MQKMRTLGEFIVEKQHDFPHASGELSSLLASIRLAAKIVNREINKAGLADIIGASGNDNIQGEEQQKLDLYANEKFKAALEARDQVCGVASEEEDEAVAFSKELNKNAKYVVLMDPLDGSSNIDVNVSVGTIFSIYRRVSPVGTPPTQEDFLQPGNKQVAAGYVIYGSSTMLVYTTGNGVNGFTYDPSLGTFYLSHENMRIPENGKIYSINEGNYIRFPTGVKKYIKFCQENVPEEGRPYTSRYIGSLVADFHRNLLKGGIYLYPSTQSHPNGKLRLLYECNPMAFLIEQAGGLASDGARRIMDIKPTELHQRVPFFVGSKNMVHKVETFLETYPD</sequence>
<name>F16PA_VIBCM</name>
<protein>
    <recommendedName>
        <fullName evidence="1">Fructose-1,6-bisphosphatase class 1</fullName>
        <shortName evidence="1">FBPase class 1</shortName>
        <ecNumber evidence="1">3.1.3.11</ecNumber>
    </recommendedName>
    <alternativeName>
        <fullName evidence="1">D-fructose-1,6-bisphosphate 1-phosphohydrolase class 1</fullName>
    </alternativeName>
</protein>
<organism>
    <name type="scientific">Vibrio cholerae serotype O1 (strain M66-2)</name>
    <dbReference type="NCBI Taxonomy" id="579112"/>
    <lineage>
        <taxon>Bacteria</taxon>
        <taxon>Pseudomonadati</taxon>
        <taxon>Pseudomonadota</taxon>
        <taxon>Gammaproteobacteria</taxon>
        <taxon>Vibrionales</taxon>
        <taxon>Vibrionaceae</taxon>
        <taxon>Vibrio</taxon>
    </lineage>
</organism>
<accession>C3LRK7</accession>
<keyword id="KW-0119">Carbohydrate metabolism</keyword>
<keyword id="KW-0963">Cytoplasm</keyword>
<keyword id="KW-0378">Hydrolase</keyword>
<keyword id="KW-0460">Magnesium</keyword>
<keyword id="KW-0479">Metal-binding</keyword>
<reference key="1">
    <citation type="journal article" date="2008" name="PLoS ONE">
        <title>A recalibrated molecular clock and independent origins for the cholera pandemic clones.</title>
        <authorList>
            <person name="Feng L."/>
            <person name="Reeves P.R."/>
            <person name="Lan R."/>
            <person name="Ren Y."/>
            <person name="Gao C."/>
            <person name="Zhou Z."/>
            <person name="Ren Y."/>
            <person name="Cheng J."/>
            <person name="Wang W."/>
            <person name="Wang J."/>
            <person name="Qian W."/>
            <person name="Li D."/>
            <person name="Wang L."/>
        </authorList>
    </citation>
    <scope>NUCLEOTIDE SEQUENCE [LARGE SCALE GENOMIC DNA]</scope>
    <source>
        <strain>M66-2</strain>
    </source>
</reference>
<feature type="chain" id="PRO_1000188686" description="Fructose-1,6-bisphosphatase class 1">
    <location>
        <begin position="1"/>
        <end position="336"/>
    </location>
</feature>
<feature type="binding site" evidence="1">
    <location>
        <position position="92"/>
    </location>
    <ligand>
        <name>Mg(2+)</name>
        <dbReference type="ChEBI" id="CHEBI:18420"/>
        <label>1</label>
    </ligand>
</feature>
<feature type="binding site" evidence="1">
    <location>
        <position position="115"/>
    </location>
    <ligand>
        <name>Mg(2+)</name>
        <dbReference type="ChEBI" id="CHEBI:18420"/>
        <label>1</label>
    </ligand>
</feature>
<feature type="binding site" evidence="1">
    <location>
        <position position="115"/>
    </location>
    <ligand>
        <name>Mg(2+)</name>
        <dbReference type="ChEBI" id="CHEBI:18420"/>
        <label>2</label>
    </ligand>
</feature>
<feature type="binding site" evidence="1">
    <location>
        <position position="117"/>
    </location>
    <ligand>
        <name>Mg(2+)</name>
        <dbReference type="ChEBI" id="CHEBI:18420"/>
        <label>1</label>
    </ligand>
</feature>
<feature type="binding site" evidence="1">
    <location>
        <begin position="118"/>
        <end position="121"/>
    </location>
    <ligand>
        <name>substrate</name>
    </ligand>
</feature>
<feature type="binding site" evidence="1">
    <location>
        <position position="118"/>
    </location>
    <ligand>
        <name>Mg(2+)</name>
        <dbReference type="ChEBI" id="CHEBI:18420"/>
        <label>2</label>
    </ligand>
</feature>
<feature type="binding site" evidence="1">
    <location>
        <position position="211"/>
    </location>
    <ligand>
        <name>substrate</name>
    </ligand>
</feature>
<feature type="binding site" evidence="1">
    <location>
        <position position="244"/>
    </location>
    <ligand>
        <name>substrate</name>
    </ligand>
</feature>
<feature type="binding site" evidence="1">
    <location>
        <begin position="262"/>
        <end position="264"/>
    </location>
    <ligand>
        <name>substrate</name>
    </ligand>
</feature>
<feature type="binding site" evidence="1">
    <location>
        <position position="274"/>
    </location>
    <ligand>
        <name>substrate</name>
    </ligand>
</feature>
<feature type="binding site" evidence="1">
    <location>
        <position position="280"/>
    </location>
    <ligand>
        <name>Mg(2+)</name>
        <dbReference type="ChEBI" id="CHEBI:18420"/>
        <label>2</label>
    </ligand>
</feature>
<dbReference type="EC" id="3.1.3.11" evidence="1"/>
<dbReference type="EMBL" id="CP001233">
    <property type="protein sequence ID" value="ACP06762.1"/>
    <property type="molecule type" value="Genomic_DNA"/>
</dbReference>
<dbReference type="RefSeq" id="WP_001171118.1">
    <property type="nucleotide sequence ID" value="NC_012578.1"/>
</dbReference>
<dbReference type="SMR" id="C3LRK7"/>
<dbReference type="GeneID" id="89513478"/>
<dbReference type="KEGG" id="vcm:VCM66_2465"/>
<dbReference type="HOGENOM" id="CLU_039977_2_2_6"/>
<dbReference type="UniPathway" id="UPA00138"/>
<dbReference type="Proteomes" id="UP000001217">
    <property type="component" value="Chromosome I"/>
</dbReference>
<dbReference type="GO" id="GO:0005829">
    <property type="term" value="C:cytosol"/>
    <property type="evidence" value="ECO:0007669"/>
    <property type="project" value="TreeGrafter"/>
</dbReference>
<dbReference type="GO" id="GO:0042132">
    <property type="term" value="F:fructose 1,6-bisphosphate 1-phosphatase activity"/>
    <property type="evidence" value="ECO:0007669"/>
    <property type="project" value="UniProtKB-UniRule"/>
</dbReference>
<dbReference type="GO" id="GO:0000287">
    <property type="term" value="F:magnesium ion binding"/>
    <property type="evidence" value="ECO:0007669"/>
    <property type="project" value="UniProtKB-UniRule"/>
</dbReference>
<dbReference type="GO" id="GO:0030388">
    <property type="term" value="P:fructose 1,6-bisphosphate metabolic process"/>
    <property type="evidence" value="ECO:0007669"/>
    <property type="project" value="TreeGrafter"/>
</dbReference>
<dbReference type="GO" id="GO:0006002">
    <property type="term" value="P:fructose 6-phosphate metabolic process"/>
    <property type="evidence" value="ECO:0007669"/>
    <property type="project" value="TreeGrafter"/>
</dbReference>
<dbReference type="GO" id="GO:0006000">
    <property type="term" value="P:fructose metabolic process"/>
    <property type="evidence" value="ECO:0007669"/>
    <property type="project" value="TreeGrafter"/>
</dbReference>
<dbReference type="GO" id="GO:0006094">
    <property type="term" value="P:gluconeogenesis"/>
    <property type="evidence" value="ECO:0007669"/>
    <property type="project" value="UniProtKB-UniRule"/>
</dbReference>
<dbReference type="GO" id="GO:0005986">
    <property type="term" value="P:sucrose biosynthetic process"/>
    <property type="evidence" value="ECO:0007669"/>
    <property type="project" value="TreeGrafter"/>
</dbReference>
<dbReference type="CDD" id="cd00354">
    <property type="entry name" value="FBPase"/>
    <property type="match status" value="1"/>
</dbReference>
<dbReference type="FunFam" id="3.30.540.10:FF:000002">
    <property type="entry name" value="Fructose-1,6-bisphosphatase class 1"/>
    <property type="match status" value="1"/>
</dbReference>
<dbReference type="FunFam" id="3.40.190.80:FF:000001">
    <property type="entry name" value="Fructose-1,6-bisphosphatase class 1"/>
    <property type="match status" value="1"/>
</dbReference>
<dbReference type="Gene3D" id="3.40.190.80">
    <property type="match status" value="1"/>
</dbReference>
<dbReference type="Gene3D" id="3.30.540.10">
    <property type="entry name" value="Fructose-1,6-Bisphosphatase, subunit A, domain 1"/>
    <property type="match status" value="1"/>
</dbReference>
<dbReference type="HAMAP" id="MF_01855">
    <property type="entry name" value="FBPase_class1"/>
    <property type="match status" value="1"/>
</dbReference>
<dbReference type="InterPro" id="IPR044015">
    <property type="entry name" value="FBPase_C_dom"/>
</dbReference>
<dbReference type="InterPro" id="IPR000146">
    <property type="entry name" value="FBPase_class-1"/>
</dbReference>
<dbReference type="InterPro" id="IPR033391">
    <property type="entry name" value="FBPase_N"/>
</dbReference>
<dbReference type="InterPro" id="IPR028343">
    <property type="entry name" value="FBPtase"/>
</dbReference>
<dbReference type="InterPro" id="IPR020548">
    <property type="entry name" value="Fructose_bisphosphatase_AS"/>
</dbReference>
<dbReference type="NCBIfam" id="NF006778">
    <property type="entry name" value="PRK09293.1-1"/>
    <property type="match status" value="1"/>
</dbReference>
<dbReference type="NCBIfam" id="NF006779">
    <property type="entry name" value="PRK09293.1-3"/>
    <property type="match status" value="1"/>
</dbReference>
<dbReference type="PANTHER" id="PTHR11556">
    <property type="entry name" value="FRUCTOSE-1,6-BISPHOSPHATASE-RELATED"/>
    <property type="match status" value="1"/>
</dbReference>
<dbReference type="PANTHER" id="PTHR11556:SF35">
    <property type="entry name" value="SEDOHEPTULOSE-1,7-BISPHOSPHATASE, CHLOROPLASTIC"/>
    <property type="match status" value="1"/>
</dbReference>
<dbReference type="Pfam" id="PF00316">
    <property type="entry name" value="FBPase"/>
    <property type="match status" value="1"/>
</dbReference>
<dbReference type="Pfam" id="PF18913">
    <property type="entry name" value="FBPase_C"/>
    <property type="match status" value="1"/>
</dbReference>
<dbReference type="PIRSF" id="PIRSF500210">
    <property type="entry name" value="FBPtase"/>
    <property type="match status" value="1"/>
</dbReference>
<dbReference type="PIRSF" id="PIRSF000904">
    <property type="entry name" value="FBPtase_SBPase"/>
    <property type="match status" value="1"/>
</dbReference>
<dbReference type="PRINTS" id="PR00115">
    <property type="entry name" value="F16BPHPHTASE"/>
</dbReference>
<dbReference type="SUPFAM" id="SSF56655">
    <property type="entry name" value="Carbohydrate phosphatase"/>
    <property type="match status" value="1"/>
</dbReference>
<dbReference type="PROSITE" id="PS00124">
    <property type="entry name" value="FBPASE"/>
    <property type="match status" value="1"/>
</dbReference>
<comment type="catalytic activity">
    <reaction evidence="1">
        <text>beta-D-fructose 1,6-bisphosphate + H2O = beta-D-fructose 6-phosphate + phosphate</text>
        <dbReference type="Rhea" id="RHEA:11064"/>
        <dbReference type="ChEBI" id="CHEBI:15377"/>
        <dbReference type="ChEBI" id="CHEBI:32966"/>
        <dbReference type="ChEBI" id="CHEBI:43474"/>
        <dbReference type="ChEBI" id="CHEBI:57634"/>
        <dbReference type="EC" id="3.1.3.11"/>
    </reaction>
</comment>
<comment type="cofactor">
    <cofactor evidence="1">
        <name>Mg(2+)</name>
        <dbReference type="ChEBI" id="CHEBI:18420"/>
    </cofactor>
    <text evidence="1">Binds 2 magnesium ions per subunit.</text>
</comment>
<comment type="pathway">
    <text evidence="1">Carbohydrate biosynthesis; gluconeogenesis.</text>
</comment>
<comment type="subunit">
    <text evidence="1">Homotetramer.</text>
</comment>
<comment type="subcellular location">
    <subcellularLocation>
        <location evidence="1">Cytoplasm</location>
    </subcellularLocation>
</comment>
<comment type="similarity">
    <text evidence="1">Belongs to the FBPase class 1 family.</text>
</comment>